<evidence type="ECO:0000255" key="1">
    <source>
        <dbReference type="HAMAP-Rule" id="MF_00244"/>
    </source>
</evidence>
<keyword id="KW-0067">ATP-binding</keyword>
<keyword id="KW-0520">NAD</keyword>
<keyword id="KW-0547">Nucleotide-binding</keyword>
<keyword id="KW-0548">Nucleotidyltransferase</keyword>
<keyword id="KW-0662">Pyridine nucleotide biosynthesis</keyword>
<keyword id="KW-0808">Transferase</keyword>
<dbReference type="EC" id="2.7.7.18" evidence="1"/>
<dbReference type="EMBL" id="AP009240">
    <property type="protein sequence ID" value="BAG76232.1"/>
    <property type="molecule type" value="Genomic_DNA"/>
</dbReference>
<dbReference type="RefSeq" id="WP_000838889.1">
    <property type="nucleotide sequence ID" value="NC_011415.1"/>
</dbReference>
<dbReference type="SMR" id="B6I150"/>
<dbReference type="GeneID" id="93776843"/>
<dbReference type="KEGG" id="ecy:ECSE_0708"/>
<dbReference type="HOGENOM" id="CLU_069765_0_0_6"/>
<dbReference type="UniPathway" id="UPA00253">
    <property type="reaction ID" value="UER00332"/>
</dbReference>
<dbReference type="Proteomes" id="UP000008199">
    <property type="component" value="Chromosome"/>
</dbReference>
<dbReference type="GO" id="GO:0005524">
    <property type="term" value="F:ATP binding"/>
    <property type="evidence" value="ECO:0007669"/>
    <property type="project" value="UniProtKB-KW"/>
</dbReference>
<dbReference type="GO" id="GO:0004515">
    <property type="term" value="F:nicotinate-nucleotide adenylyltransferase activity"/>
    <property type="evidence" value="ECO:0007669"/>
    <property type="project" value="UniProtKB-UniRule"/>
</dbReference>
<dbReference type="GO" id="GO:0009435">
    <property type="term" value="P:NAD biosynthetic process"/>
    <property type="evidence" value="ECO:0007669"/>
    <property type="project" value="UniProtKB-UniRule"/>
</dbReference>
<dbReference type="CDD" id="cd02165">
    <property type="entry name" value="NMNAT"/>
    <property type="match status" value="1"/>
</dbReference>
<dbReference type="FunFam" id="3.40.50.620:FF:000039">
    <property type="entry name" value="Probable nicotinate-nucleotide adenylyltransferase"/>
    <property type="match status" value="1"/>
</dbReference>
<dbReference type="Gene3D" id="3.40.50.620">
    <property type="entry name" value="HUPs"/>
    <property type="match status" value="1"/>
</dbReference>
<dbReference type="HAMAP" id="MF_00244">
    <property type="entry name" value="NaMN_adenylyltr"/>
    <property type="match status" value="1"/>
</dbReference>
<dbReference type="InterPro" id="IPR004821">
    <property type="entry name" value="Cyt_trans-like"/>
</dbReference>
<dbReference type="InterPro" id="IPR005248">
    <property type="entry name" value="NadD/NMNAT"/>
</dbReference>
<dbReference type="InterPro" id="IPR014729">
    <property type="entry name" value="Rossmann-like_a/b/a_fold"/>
</dbReference>
<dbReference type="NCBIfam" id="TIGR00125">
    <property type="entry name" value="cyt_tran_rel"/>
    <property type="match status" value="1"/>
</dbReference>
<dbReference type="NCBIfam" id="TIGR00482">
    <property type="entry name" value="nicotinate (nicotinamide) nucleotide adenylyltransferase"/>
    <property type="match status" value="1"/>
</dbReference>
<dbReference type="NCBIfam" id="NF000839">
    <property type="entry name" value="PRK00071.1-1"/>
    <property type="match status" value="1"/>
</dbReference>
<dbReference type="NCBIfam" id="NF000840">
    <property type="entry name" value="PRK00071.1-3"/>
    <property type="match status" value="1"/>
</dbReference>
<dbReference type="PANTHER" id="PTHR39321">
    <property type="entry name" value="NICOTINATE-NUCLEOTIDE ADENYLYLTRANSFERASE-RELATED"/>
    <property type="match status" value="1"/>
</dbReference>
<dbReference type="PANTHER" id="PTHR39321:SF3">
    <property type="entry name" value="PHOSPHOPANTETHEINE ADENYLYLTRANSFERASE"/>
    <property type="match status" value="1"/>
</dbReference>
<dbReference type="Pfam" id="PF01467">
    <property type="entry name" value="CTP_transf_like"/>
    <property type="match status" value="1"/>
</dbReference>
<dbReference type="SUPFAM" id="SSF52374">
    <property type="entry name" value="Nucleotidylyl transferase"/>
    <property type="match status" value="1"/>
</dbReference>
<gene>
    <name evidence="1" type="primary">nadD</name>
    <name type="ordered locus">ECSE_0708</name>
</gene>
<feature type="chain" id="PRO_1000100775" description="Probable nicotinate-nucleotide adenylyltransferase">
    <location>
        <begin position="1"/>
        <end position="213"/>
    </location>
</feature>
<accession>B6I150</accession>
<organism>
    <name type="scientific">Escherichia coli (strain SE11)</name>
    <dbReference type="NCBI Taxonomy" id="409438"/>
    <lineage>
        <taxon>Bacteria</taxon>
        <taxon>Pseudomonadati</taxon>
        <taxon>Pseudomonadota</taxon>
        <taxon>Gammaproteobacteria</taxon>
        <taxon>Enterobacterales</taxon>
        <taxon>Enterobacteriaceae</taxon>
        <taxon>Escherichia</taxon>
    </lineage>
</organism>
<proteinExistence type="inferred from homology"/>
<sequence>MKSLQALFGGTFDPVHYGHLKPVETLANLIGLTRVTIIPNNVPPHRPQPEANSVQRKHMLELAIADKPLFTLDERELKRNAPSYTAQTLKEWRQEQGPDVPLAFIIGQDSLLTFPTWYEYETILDNAHLIVCRRPGYPLEMAQPQYQQWLEDHLTHNPEDLHLQPAGKIYLAETPWFNISATIIRERLQNGESCEDLLPEPVLTYINQQGLYR</sequence>
<name>NADD_ECOSE</name>
<reference key="1">
    <citation type="journal article" date="2008" name="DNA Res.">
        <title>Complete genome sequence and comparative analysis of the wild-type commensal Escherichia coli strain SE11 isolated from a healthy adult.</title>
        <authorList>
            <person name="Oshima K."/>
            <person name="Toh H."/>
            <person name="Ogura Y."/>
            <person name="Sasamoto H."/>
            <person name="Morita H."/>
            <person name="Park S.-H."/>
            <person name="Ooka T."/>
            <person name="Iyoda S."/>
            <person name="Taylor T.D."/>
            <person name="Hayashi T."/>
            <person name="Itoh K."/>
            <person name="Hattori M."/>
        </authorList>
    </citation>
    <scope>NUCLEOTIDE SEQUENCE [LARGE SCALE GENOMIC DNA]</scope>
    <source>
        <strain>SE11</strain>
    </source>
</reference>
<comment type="function">
    <text evidence="1">Catalyzes the reversible adenylation of nicotinate mononucleotide (NaMN) to nicotinic acid adenine dinucleotide (NaAD).</text>
</comment>
<comment type="catalytic activity">
    <reaction evidence="1">
        <text>nicotinate beta-D-ribonucleotide + ATP + H(+) = deamido-NAD(+) + diphosphate</text>
        <dbReference type="Rhea" id="RHEA:22860"/>
        <dbReference type="ChEBI" id="CHEBI:15378"/>
        <dbReference type="ChEBI" id="CHEBI:30616"/>
        <dbReference type="ChEBI" id="CHEBI:33019"/>
        <dbReference type="ChEBI" id="CHEBI:57502"/>
        <dbReference type="ChEBI" id="CHEBI:58437"/>
        <dbReference type="EC" id="2.7.7.18"/>
    </reaction>
</comment>
<comment type="pathway">
    <text evidence="1">Cofactor biosynthesis; NAD(+) biosynthesis; deamido-NAD(+) from nicotinate D-ribonucleotide: step 1/1.</text>
</comment>
<comment type="similarity">
    <text evidence="1">Belongs to the NadD family.</text>
</comment>
<protein>
    <recommendedName>
        <fullName evidence="1">Probable nicotinate-nucleotide adenylyltransferase</fullName>
        <ecNumber evidence="1">2.7.7.18</ecNumber>
    </recommendedName>
    <alternativeName>
        <fullName evidence="1">Deamido-NAD(+) diphosphorylase</fullName>
    </alternativeName>
    <alternativeName>
        <fullName evidence="1">Deamido-NAD(+) pyrophosphorylase</fullName>
    </alternativeName>
    <alternativeName>
        <fullName evidence="1">Nicotinate mononucleotide adenylyltransferase</fullName>
        <shortName evidence="1">NaMN adenylyltransferase</shortName>
    </alternativeName>
</protein>